<name>P2C18_ORYSJ</name>
<reference key="1">
    <citation type="journal article" date="2005" name="Nature">
        <title>The map-based sequence of the rice genome.</title>
        <authorList>
            <consortium name="International rice genome sequencing project (IRGSP)"/>
        </authorList>
    </citation>
    <scope>NUCLEOTIDE SEQUENCE [LARGE SCALE GENOMIC DNA]</scope>
    <source>
        <strain>cv. Nipponbare</strain>
    </source>
</reference>
<reference key="2">
    <citation type="journal article" date="2008" name="Nucleic Acids Res.">
        <title>The rice annotation project database (RAP-DB): 2008 update.</title>
        <authorList>
            <consortium name="The rice annotation project (RAP)"/>
        </authorList>
    </citation>
    <scope>GENOME REANNOTATION</scope>
    <source>
        <strain>cv. Nipponbare</strain>
    </source>
</reference>
<reference key="3">
    <citation type="journal article" date="2013" name="Rice">
        <title>Improvement of the Oryza sativa Nipponbare reference genome using next generation sequence and optical map data.</title>
        <authorList>
            <person name="Kawahara Y."/>
            <person name="de la Bastide M."/>
            <person name="Hamilton J.P."/>
            <person name="Kanamori H."/>
            <person name="McCombie W.R."/>
            <person name="Ouyang S."/>
            <person name="Schwartz D.C."/>
            <person name="Tanaka T."/>
            <person name="Wu J."/>
            <person name="Zhou S."/>
            <person name="Childs K.L."/>
            <person name="Davidson R.M."/>
            <person name="Lin H."/>
            <person name="Quesada-Ocampo L."/>
            <person name="Vaillancourt B."/>
            <person name="Sakai H."/>
            <person name="Lee S.S."/>
            <person name="Kim J."/>
            <person name="Numa H."/>
            <person name="Itoh T."/>
            <person name="Buell C.R."/>
            <person name="Matsumoto T."/>
        </authorList>
    </citation>
    <scope>GENOME REANNOTATION</scope>
    <source>
        <strain>cv. Nipponbare</strain>
    </source>
</reference>
<reference key="4">
    <citation type="journal article" date="2005" name="PLoS Biol.">
        <title>The genomes of Oryza sativa: a history of duplications.</title>
        <authorList>
            <person name="Yu J."/>
            <person name="Wang J."/>
            <person name="Lin W."/>
            <person name="Li S."/>
            <person name="Li H."/>
            <person name="Zhou J."/>
            <person name="Ni P."/>
            <person name="Dong W."/>
            <person name="Hu S."/>
            <person name="Zeng C."/>
            <person name="Zhang J."/>
            <person name="Zhang Y."/>
            <person name="Li R."/>
            <person name="Xu Z."/>
            <person name="Li S."/>
            <person name="Li X."/>
            <person name="Zheng H."/>
            <person name="Cong L."/>
            <person name="Lin L."/>
            <person name="Yin J."/>
            <person name="Geng J."/>
            <person name="Li G."/>
            <person name="Shi J."/>
            <person name="Liu J."/>
            <person name="Lv H."/>
            <person name="Li J."/>
            <person name="Wang J."/>
            <person name="Deng Y."/>
            <person name="Ran L."/>
            <person name="Shi X."/>
            <person name="Wang X."/>
            <person name="Wu Q."/>
            <person name="Li C."/>
            <person name="Ren X."/>
            <person name="Wang J."/>
            <person name="Wang X."/>
            <person name="Li D."/>
            <person name="Liu D."/>
            <person name="Zhang X."/>
            <person name="Ji Z."/>
            <person name="Zhao W."/>
            <person name="Sun Y."/>
            <person name="Zhang Z."/>
            <person name="Bao J."/>
            <person name="Han Y."/>
            <person name="Dong L."/>
            <person name="Ji J."/>
            <person name="Chen P."/>
            <person name="Wu S."/>
            <person name="Liu J."/>
            <person name="Xiao Y."/>
            <person name="Bu D."/>
            <person name="Tan J."/>
            <person name="Yang L."/>
            <person name="Ye C."/>
            <person name="Zhang J."/>
            <person name="Xu J."/>
            <person name="Zhou Y."/>
            <person name="Yu Y."/>
            <person name="Zhang B."/>
            <person name="Zhuang S."/>
            <person name="Wei H."/>
            <person name="Liu B."/>
            <person name="Lei M."/>
            <person name="Yu H."/>
            <person name="Li Y."/>
            <person name="Xu H."/>
            <person name="Wei S."/>
            <person name="He X."/>
            <person name="Fang L."/>
            <person name="Zhang Z."/>
            <person name="Zhang Y."/>
            <person name="Huang X."/>
            <person name="Su Z."/>
            <person name="Tong W."/>
            <person name="Li J."/>
            <person name="Tong Z."/>
            <person name="Li S."/>
            <person name="Ye J."/>
            <person name="Wang L."/>
            <person name="Fang L."/>
            <person name="Lei T."/>
            <person name="Chen C.-S."/>
            <person name="Chen H.-C."/>
            <person name="Xu Z."/>
            <person name="Li H."/>
            <person name="Huang H."/>
            <person name="Zhang F."/>
            <person name="Xu H."/>
            <person name="Li N."/>
            <person name="Zhao C."/>
            <person name="Li S."/>
            <person name="Dong L."/>
            <person name="Huang Y."/>
            <person name="Li L."/>
            <person name="Xi Y."/>
            <person name="Qi Q."/>
            <person name="Li W."/>
            <person name="Zhang B."/>
            <person name="Hu W."/>
            <person name="Zhang Y."/>
            <person name="Tian X."/>
            <person name="Jiao Y."/>
            <person name="Liang X."/>
            <person name="Jin J."/>
            <person name="Gao L."/>
            <person name="Zheng W."/>
            <person name="Hao B."/>
            <person name="Liu S.-M."/>
            <person name="Wang W."/>
            <person name="Yuan L."/>
            <person name="Cao M."/>
            <person name="McDermott J."/>
            <person name="Samudrala R."/>
            <person name="Wang J."/>
            <person name="Wong G.K.-S."/>
            <person name="Yang H."/>
        </authorList>
    </citation>
    <scope>NUCLEOTIDE SEQUENCE [LARGE SCALE GENOMIC DNA]</scope>
    <source>
        <strain>cv. Nipponbare</strain>
    </source>
</reference>
<reference key="5">
    <citation type="journal article" date="2003" name="Science">
        <title>Collection, mapping, and annotation of over 28,000 cDNA clones from japonica rice.</title>
        <authorList>
            <consortium name="The rice full-length cDNA consortium"/>
        </authorList>
    </citation>
    <scope>NUCLEOTIDE SEQUENCE [LARGE SCALE MRNA] OF 343-804</scope>
    <source>
        <strain>cv. Nipponbare</strain>
    </source>
</reference>
<reference key="6">
    <citation type="journal article" date="2008" name="BMC Genomics">
        <title>Genome-wide and expression analysis of protein phosphatase 2C in rice and Arabidopsis.</title>
        <authorList>
            <person name="Xue T."/>
            <person name="Wang D."/>
            <person name="Zhang S."/>
            <person name="Ehlting J."/>
            <person name="Ni F."/>
            <person name="Jacab S."/>
            <person name="Zheng C."/>
            <person name="Zhong Y."/>
        </authorList>
    </citation>
    <scope>GENE FAMILY</scope>
    <scope>NOMENCLATURE</scope>
</reference>
<gene>
    <name type="ordered locus">Os02g0599200</name>
    <name type="ordered locus">LOC_Os02g38710</name>
    <name type="ORF">OsJ_007176</name>
    <name type="ORF">OSJNBa0038P01.37</name>
</gene>
<proteinExistence type="evidence at transcript level"/>
<comment type="catalytic activity">
    <reaction>
        <text>O-phospho-L-seryl-[protein] + H2O = L-seryl-[protein] + phosphate</text>
        <dbReference type="Rhea" id="RHEA:20629"/>
        <dbReference type="Rhea" id="RHEA-COMP:9863"/>
        <dbReference type="Rhea" id="RHEA-COMP:11604"/>
        <dbReference type="ChEBI" id="CHEBI:15377"/>
        <dbReference type="ChEBI" id="CHEBI:29999"/>
        <dbReference type="ChEBI" id="CHEBI:43474"/>
        <dbReference type="ChEBI" id="CHEBI:83421"/>
        <dbReference type="EC" id="3.1.3.16"/>
    </reaction>
</comment>
<comment type="catalytic activity">
    <reaction>
        <text>O-phospho-L-threonyl-[protein] + H2O = L-threonyl-[protein] + phosphate</text>
        <dbReference type="Rhea" id="RHEA:47004"/>
        <dbReference type="Rhea" id="RHEA-COMP:11060"/>
        <dbReference type="Rhea" id="RHEA-COMP:11605"/>
        <dbReference type="ChEBI" id="CHEBI:15377"/>
        <dbReference type="ChEBI" id="CHEBI:30013"/>
        <dbReference type="ChEBI" id="CHEBI:43474"/>
        <dbReference type="ChEBI" id="CHEBI:61977"/>
        <dbReference type="EC" id="3.1.3.16"/>
    </reaction>
</comment>
<comment type="cofactor">
    <cofactor evidence="1">
        <name>Mg(2+)</name>
        <dbReference type="ChEBI" id="CHEBI:18420"/>
    </cofactor>
    <cofactor evidence="1">
        <name>Mn(2+)</name>
        <dbReference type="ChEBI" id="CHEBI:29035"/>
    </cofactor>
    <text evidence="1">Binds 2 magnesium or manganese ions per subunit.</text>
</comment>
<comment type="subcellular location">
    <subcellularLocation>
        <location evidence="5">Membrane</location>
        <topology evidence="5">Single-pass membrane protein</topology>
    </subcellularLocation>
</comment>
<comment type="similarity">
    <text evidence="5">Belongs to the PP2C family.</text>
</comment>
<comment type="sequence caution" evidence="5">
    <conflict type="erroneous gene model prediction">
        <sequence resource="EMBL-CDS" id="BAD22514"/>
    </conflict>
</comment>
<comment type="sequence caution" evidence="5">
    <conflict type="erroneous gene model prediction">
        <sequence resource="EMBL-CDS" id="BAF09251"/>
    </conflict>
</comment>
<keyword id="KW-0378">Hydrolase</keyword>
<keyword id="KW-0460">Magnesium</keyword>
<keyword id="KW-0464">Manganese</keyword>
<keyword id="KW-0472">Membrane</keyword>
<keyword id="KW-0479">Metal-binding</keyword>
<keyword id="KW-0904">Protein phosphatase</keyword>
<keyword id="KW-1185">Reference proteome</keyword>
<keyword id="KW-0812">Transmembrane</keyword>
<keyword id="KW-1133">Transmembrane helix</keyword>
<protein>
    <recommendedName>
        <fullName>Probable protein phosphatase 2C 18</fullName>
        <shortName>OsPP2C18</shortName>
        <ecNumber>3.1.3.16</ecNumber>
    </recommendedName>
</protein>
<organism>
    <name type="scientific">Oryza sativa subsp. japonica</name>
    <name type="common">Rice</name>
    <dbReference type="NCBI Taxonomy" id="39947"/>
    <lineage>
        <taxon>Eukaryota</taxon>
        <taxon>Viridiplantae</taxon>
        <taxon>Streptophyta</taxon>
        <taxon>Embryophyta</taxon>
        <taxon>Tracheophyta</taxon>
        <taxon>Spermatophyta</taxon>
        <taxon>Magnoliopsida</taxon>
        <taxon>Liliopsida</taxon>
        <taxon>Poales</taxon>
        <taxon>Poaceae</taxon>
        <taxon>BOP clade</taxon>
        <taxon>Oryzoideae</taxon>
        <taxon>Oryzeae</taxon>
        <taxon>Oryzinae</taxon>
        <taxon>Oryza</taxon>
        <taxon>Oryza sativa</taxon>
    </lineage>
</organism>
<dbReference type="EC" id="3.1.3.16"/>
<dbReference type="EMBL" id="AP006457">
    <property type="protein sequence ID" value="BAD22514.1"/>
    <property type="status" value="ALT_SEQ"/>
    <property type="molecule type" value="Genomic_DNA"/>
</dbReference>
<dbReference type="EMBL" id="AP008208">
    <property type="protein sequence ID" value="BAF09251.1"/>
    <property type="status" value="ALT_SEQ"/>
    <property type="molecule type" value="Genomic_DNA"/>
</dbReference>
<dbReference type="EMBL" id="AP014958">
    <property type="status" value="NOT_ANNOTATED_CDS"/>
    <property type="molecule type" value="Genomic_DNA"/>
</dbReference>
<dbReference type="EMBL" id="CM000139">
    <property type="status" value="NOT_ANNOTATED_CDS"/>
    <property type="molecule type" value="Genomic_DNA"/>
</dbReference>
<dbReference type="EMBL" id="AK119492">
    <property type="status" value="NOT_ANNOTATED_CDS"/>
    <property type="molecule type" value="mRNA"/>
</dbReference>
<dbReference type="SMR" id="A3A8Q4"/>
<dbReference type="FunCoup" id="A3A8Q4">
    <property type="interactions" value="3"/>
</dbReference>
<dbReference type="STRING" id="39947.A3A8Q4"/>
<dbReference type="PaxDb" id="39947-A3A8Q4"/>
<dbReference type="KEGG" id="dosa:Os02g0599200"/>
<dbReference type="eggNOG" id="KOG0698">
    <property type="taxonomic scope" value="Eukaryota"/>
</dbReference>
<dbReference type="HOGENOM" id="CLU_593963_0_0_1"/>
<dbReference type="InParanoid" id="A3A8Q4"/>
<dbReference type="Proteomes" id="UP000000763">
    <property type="component" value="Chromosome 2"/>
</dbReference>
<dbReference type="Proteomes" id="UP000007752">
    <property type="component" value="Chromosome 2"/>
</dbReference>
<dbReference type="Proteomes" id="UP000059680">
    <property type="component" value="Chromosome 2"/>
</dbReference>
<dbReference type="GO" id="GO:0016020">
    <property type="term" value="C:membrane"/>
    <property type="evidence" value="ECO:0007669"/>
    <property type="project" value="UniProtKB-SubCell"/>
</dbReference>
<dbReference type="GO" id="GO:0046872">
    <property type="term" value="F:metal ion binding"/>
    <property type="evidence" value="ECO:0007669"/>
    <property type="project" value="UniProtKB-KW"/>
</dbReference>
<dbReference type="GO" id="GO:0004722">
    <property type="term" value="F:protein serine/threonine phosphatase activity"/>
    <property type="evidence" value="ECO:0007669"/>
    <property type="project" value="UniProtKB-EC"/>
</dbReference>
<dbReference type="GO" id="GO:0007165">
    <property type="term" value="P:signal transduction"/>
    <property type="evidence" value="ECO:0000318"/>
    <property type="project" value="GO_Central"/>
</dbReference>
<dbReference type="CDD" id="cd00143">
    <property type="entry name" value="PP2Cc"/>
    <property type="match status" value="1"/>
</dbReference>
<dbReference type="FunFam" id="3.60.40.10:FF:000056">
    <property type="entry name" value="Probable protein phosphatase 2C 18"/>
    <property type="match status" value="1"/>
</dbReference>
<dbReference type="Gene3D" id="3.60.40.10">
    <property type="entry name" value="PPM-type phosphatase domain"/>
    <property type="match status" value="1"/>
</dbReference>
<dbReference type="InterPro" id="IPR015655">
    <property type="entry name" value="PP2C"/>
</dbReference>
<dbReference type="InterPro" id="IPR000222">
    <property type="entry name" value="PP2C_BS"/>
</dbReference>
<dbReference type="InterPro" id="IPR036457">
    <property type="entry name" value="PPM-type-like_dom_sf"/>
</dbReference>
<dbReference type="InterPro" id="IPR001932">
    <property type="entry name" value="PPM-type_phosphatase-like_dom"/>
</dbReference>
<dbReference type="PANTHER" id="PTHR13832">
    <property type="entry name" value="PROTEIN PHOSPHATASE 2C"/>
    <property type="match status" value="1"/>
</dbReference>
<dbReference type="PANTHER" id="PTHR13832:SF285">
    <property type="entry name" value="PROTEIN PHOSPHATASE 2C 22-RELATED"/>
    <property type="match status" value="1"/>
</dbReference>
<dbReference type="Pfam" id="PF00481">
    <property type="entry name" value="PP2C"/>
    <property type="match status" value="2"/>
</dbReference>
<dbReference type="SMART" id="SM00332">
    <property type="entry name" value="PP2Cc"/>
    <property type="match status" value="1"/>
</dbReference>
<dbReference type="SUPFAM" id="SSF81606">
    <property type="entry name" value="PP2C-like"/>
    <property type="match status" value="1"/>
</dbReference>
<dbReference type="PROSITE" id="PS01032">
    <property type="entry name" value="PPM_1"/>
    <property type="match status" value="1"/>
</dbReference>
<dbReference type="PROSITE" id="PS51746">
    <property type="entry name" value="PPM_2"/>
    <property type="match status" value="1"/>
</dbReference>
<evidence type="ECO:0000250" key="1"/>
<evidence type="ECO:0000255" key="2"/>
<evidence type="ECO:0000255" key="3">
    <source>
        <dbReference type="PROSITE-ProRule" id="PRU01082"/>
    </source>
</evidence>
<evidence type="ECO:0000256" key="4">
    <source>
        <dbReference type="SAM" id="MobiDB-lite"/>
    </source>
</evidence>
<evidence type="ECO:0000305" key="5"/>
<sequence>MGPLLERWISREGRSDGGDASGPVLFWCVLIIFAVPDAIRSSSLRLGQVAPRLVLFSNFKAFRSPKFAKILPGSDLFSPRVLGFRTRVVLLLDVFEVGFALFCKASSTMGNSLPVESKVTVEEENDRIKYIVSSMQGLGHKMEDAHAAILSLDDTTSTSFFGVYDGHGGAEVASYCAKRFHIELCNHEDYHNDLTNALDNVFFSMDENLQQSDAWRELVIPRDNGWMYFLKAGVCANFWPFPQAYTGPAYEGSTACVVVIRGDQMIVGHAGDSRCVLSRQGGLAIDLSSDHKPRTSESERERVQNAGGISLGVDCEKVMENYVIKEQWILGYFGESVTISRSIGDFAFKQNKDLNREEQMLICDPDIHTHDITGDMEFLVIASQGLWSCMESADVVAYIHVRLLEGVELRVICEELVQSGLASGENTTVILVQFKPGAFQFQYELVDPAAFDTAASNVASTSAGPAGGSDSDTSATSDEGVDDTATAGTTTTGYEAGSSTGPGSGGGSANAAFDSGGDLAANLDIATNFGSDDLAANLDIATDIDTEDVFTFINSDDTFGINSDEVELDPNFRPKPQVRRAHDGPSPTPSEIEADLNASPTRYNMRDIFEAFDKVEAELGGFPLQGHDVSSTSTNPNTATDTGSGSRTGDDDVDGAIARAMAVASSVMTGAGYEVDSTTTNPSAAADTGSYTGDEIKVDDSTSGSARGDSGELVNNDTTVADNNASGVADSTTVGDEVDPTATVAADDSNTGDKVDPPAITKATADSNTSGEVDVDATATATASASAAVADDEGTAPDDSEGSP</sequence>
<accession>A3A8Q4</accession>
<accession>Q6K1T6</accession>
<feature type="chain" id="PRO_0000363264" description="Probable protein phosphatase 2C 18">
    <location>
        <begin position="1"/>
        <end position="804"/>
    </location>
</feature>
<feature type="transmembrane region" description="Helical" evidence="2">
    <location>
        <begin position="19"/>
        <end position="39"/>
    </location>
</feature>
<feature type="domain" description="PPM-type phosphatase" evidence="3">
    <location>
        <begin position="129"/>
        <end position="434"/>
    </location>
</feature>
<feature type="region of interest" description="Disordered" evidence="4">
    <location>
        <begin position="460"/>
        <end position="509"/>
    </location>
</feature>
<feature type="region of interest" description="Disordered" evidence="4">
    <location>
        <begin position="564"/>
        <end position="599"/>
    </location>
</feature>
<feature type="region of interest" description="Disordered" evidence="4">
    <location>
        <begin position="623"/>
        <end position="653"/>
    </location>
</feature>
<feature type="region of interest" description="Disordered" evidence="4">
    <location>
        <begin position="675"/>
        <end position="804"/>
    </location>
</feature>
<feature type="compositionally biased region" description="Low complexity" evidence="4">
    <location>
        <begin position="468"/>
        <end position="499"/>
    </location>
</feature>
<feature type="compositionally biased region" description="Polar residues" evidence="4">
    <location>
        <begin position="628"/>
        <end position="637"/>
    </location>
</feature>
<feature type="compositionally biased region" description="Low complexity" evidence="4">
    <location>
        <begin position="638"/>
        <end position="647"/>
    </location>
</feature>
<feature type="compositionally biased region" description="Polar residues" evidence="4">
    <location>
        <begin position="713"/>
        <end position="734"/>
    </location>
</feature>
<feature type="compositionally biased region" description="Low complexity" evidence="4">
    <location>
        <begin position="776"/>
        <end position="789"/>
    </location>
</feature>
<feature type="compositionally biased region" description="Acidic residues" evidence="4">
    <location>
        <begin position="790"/>
        <end position="804"/>
    </location>
</feature>
<feature type="binding site" evidence="1">
    <location>
        <position position="165"/>
    </location>
    <ligand>
        <name>Mn(2+)</name>
        <dbReference type="ChEBI" id="CHEBI:29035"/>
        <label>1</label>
    </ligand>
</feature>
<feature type="binding site" evidence="1">
    <location>
        <position position="165"/>
    </location>
    <ligand>
        <name>Mn(2+)</name>
        <dbReference type="ChEBI" id="CHEBI:29035"/>
        <label>2</label>
    </ligand>
</feature>
<feature type="binding site" evidence="1">
    <location>
        <position position="166"/>
    </location>
    <ligand>
        <name>Mn(2+)</name>
        <dbReference type="ChEBI" id="CHEBI:29035"/>
        <label>1</label>
    </ligand>
</feature>
<feature type="binding site" evidence="1">
    <location>
        <position position="384"/>
    </location>
    <ligand>
        <name>Mn(2+)</name>
        <dbReference type="ChEBI" id="CHEBI:29035"/>
        <label>2</label>
    </ligand>
</feature>
<feature type="binding site" evidence="1">
    <location>
        <position position="425"/>
    </location>
    <ligand>
        <name>Mn(2+)</name>
        <dbReference type="ChEBI" id="CHEBI:29035"/>
        <label>2</label>
    </ligand>
</feature>
<feature type="sequence conflict" description="In Ref. 4; CM000139." evidence="5" ref="4">
    <original>VE</original>
    <variation>LK</variation>
    <location>
        <begin position="407"/>
        <end position="408"/>
    </location>
</feature>